<gene>
    <name evidence="1" type="primary">ubiE</name>
    <name type="ordered locus">YPN_0183</name>
    <name type="ORF">YP516_0149</name>
</gene>
<comment type="function">
    <text evidence="1">Methyltransferase required for the conversion of demethylmenaquinol (DMKH2) to menaquinol (MKH2) and the conversion of 2-polyprenyl-6-methoxy-1,4-benzoquinol (DDMQH2) to 2-polyprenyl-3-methyl-6-methoxy-1,4-benzoquinol (DMQH2).</text>
</comment>
<comment type="catalytic activity">
    <reaction evidence="1">
        <text>a 2-demethylmenaquinol + S-adenosyl-L-methionine = a menaquinol + S-adenosyl-L-homocysteine + H(+)</text>
        <dbReference type="Rhea" id="RHEA:42640"/>
        <dbReference type="Rhea" id="RHEA-COMP:9539"/>
        <dbReference type="Rhea" id="RHEA-COMP:9563"/>
        <dbReference type="ChEBI" id="CHEBI:15378"/>
        <dbReference type="ChEBI" id="CHEBI:18151"/>
        <dbReference type="ChEBI" id="CHEBI:55437"/>
        <dbReference type="ChEBI" id="CHEBI:57856"/>
        <dbReference type="ChEBI" id="CHEBI:59789"/>
        <dbReference type="EC" id="2.1.1.163"/>
    </reaction>
</comment>
<comment type="catalytic activity">
    <reaction evidence="1">
        <text>a 2-methoxy-6-(all-trans-polyprenyl)benzene-1,4-diol + S-adenosyl-L-methionine = a 5-methoxy-2-methyl-3-(all-trans-polyprenyl)benzene-1,4-diol + S-adenosyl-L-homocysteine + H(+)</text>
        <dbReference type="Rhea" id="RHEA:28286"/>
        <dbReference type="Rhea" id="RHEA-COMP:10858"/>
        <dbReference type="Rhea" id="RHEA-COMP:10859"/>
        <dbReference type="ChEBI" id="CHEBI:15378"/>
        <dbReference type="ChEBI" id="CHEBI:57856"/>
        <dbReference type="ChEBI" id="CHEBI:59789"/>
        <dbReference type="ChEBI" id="CHEBI:84166"/>
        <dbReference type="ChEBI" id="CHEBI:84167"/>
        <dbReference type="EC" id="2.1.1.201"/>
    </reaction>
</comment>
<comment type="pathway">
    <text evidence="1">Quinol/quinone metabolism; menaquinone biosynthesis; menaquinol from 1,4-dihydroxy-2-naphthoate: step 2/2.</text>
</comment>
<comment type="pathway">
    <text evidence="1">Cofactor biosynthesis; ubiquinone biosynthesis.</text>
</comment>
<comment type="similarity">
    <text evidence="1">Belongs to the class I-like SAM-binding methyltransferase superfamily. MenG/UbiE family.</text>
</comment>
<organism>
    <name type="scientific">Yersinia pestis bv. Antiqua (strain Nepal516)</name>
    <dbReference type="NCBI Taxonomy" id="377628"/>
    <lineage>
        <taxon>Bacteria</taxon>
        <taxon>Pseudomonadati</taxon>
        <taxon>Pseudomonadota</taxon>
        <taxon>Gammaproteobacteria</taxon>
        <taxon>Enterobacterales</taxon>
        <taxon>Yersiniaceae</taxon>
        <taxon>Yersinia</taxon>
    </lineage>
</organism>
<dbReference type="EC" id="2.1.1.163" evidence="1"/>
<dbReference type="EC" id="2.1.1.201" evidence="1"/>
<dbReference type="EMBL" id="CP000305">
    <property type="protein sequence ID" value="ABG16516.1"/>
    <property type="molecule type" value="Genomic_DNA"/>
</dbReference>
<dbReference type="EMBL" id="ACNQ01000001">
    <property type="protein sequence ID" value="EEO78630.1"/>
    <property type="molecule type" value="Genomic_DNA"/>
</dbReference>
<dbReference type="RefSeq" id="WP_002224024.1">
    <property type="nucleotide sequence ID" value="NZ_ACNQ01000001.1"/>
</dbReference>
<dbReference type="SMR" id="Q1CNB4"/>
<dbReference type="GeneID" id="49787763"/>
<dbReference type="KEGG" id="ypn:YPN_0183"/>
<dbReference type="HOGENOM" id="CLU_037990_0_0_6"/>
<dbReference type="UniPathway" id="UPA00079">
    <property type="reaction ID" value="UER00169"/>
</dbReference>
<dbReference type="UniPathway" id="UPA00232"/>
<dbReference type="Proteomes" id="UP000008936">
    <property type="component" value="Chromosome"/>
</dbReference>
<dbReference type="GO" id="GO:0008425">
    <property type="term" value="F:2-methoxy-6-polyprenyl-1,4-benzoquinol methyltransferase activity"/>
    <property type="evidence" value="ECO:0007669"/>
    <property type="project" value="UniProtKB-UniRule"/>
</dbReference>
<dbReference type="GO" id="GO:0043770">
    <property type="term" value="F:demethylmenaquinone methyltransferase activity"/>
    <property type="evidence" value="ECO:0007669"/>
    <property type="project" value="UniProtKB-UniRule"/>
</dbReference>
<dbReference type="GO" id="GO:0009060">
    <property type="term" value="P:aerobic respiration"/>
    <property type="evidence" value="ECO:0007669"/>
    <property type="project" value="UniProtKB-UniRule"/>
</dbReference>
<dbReference type="GO" id="GO:0009234">
    <property type="term" value="P:menaquinone biosynthetic process"/>
    <property type="evidence" value="ECO:0007669"/>
    <property type="project" value="UniProtKB-UniRule"/>
</dbReference>
<dbReference type="GO" id="GO:0032259">
    <property type="term" value="P:methylation"/>
    <property type="evidence" value="ECO:0007669"/>
    <property type="project" value="UniProtKB-KW"/>
</dbReference>
<dbReference type="CDD" id="cd02440">
    <property type="entry name" value="AdoMet_MTases"/>
    <property type="match status" value="1"/>
</dbReference>
<dbReference type="FunFam" id="3.40.50.150:FF:000014">
    <property type="entry name" value="Ubiquinone/menaquinone biosynthesis C-methyltransferase UbiE"/>
    <property type="match status" value="1"/>
</dbReference>
<dbReference type="Gene3D" id="3.40.50.150">
    <property type="entry name" value="Vaccinia Virus protein VP39"/>
    <property type="match status" value="1"/>
</dbReference>
<dbReference type="HAMAP" id="MF_01813">
    <property type="entry name" value="MenG_UbiE_methyltr"/>
    <property type="match status" value="1"/>
</dbReference>
<dbReference type="InterPro" id="IPR029063">
    <property type="entry name" value="SAM-dependent_MTases_sf"/>
</dbReference>
<dbReference type="InterPro" id="IPR004033">
    <property type="entry name" value="UbiE/COQ5_MeTrFase"/>
</dbReference>
<dbReference type="InterPro" id="IPR023576">
    <property type="entry name" value="UbiE/COQ5_MeTrFase_CS"/>
</dbReference>
<dbReference type="NCBIfam" id="TIGR01934">
    <property type="entry name" value="MenG_MenH_UbiE"/>
    <property type="match status" value="1"/>
</dbReference>
<dbReference type="NCBIfam" id="NF001240">
    <property type="entry name" value="PRK00216.1-1"/>
    <property type="match status" value="1"/>
</dbReference>
<dbReference type="NCBIfam" id="NF001242">
    <property type="entry name" value="PRK00216.1-3"/>
    <property type="match status" value="1"/>
</dbReference>
<dbReference type="NCBIfam" id="NF001244">
    <property type="entry name" value="PRK00216.1-5"/>
    <property type="match status" value="1"/>
</dbReference>
<dbReference type="PANTHER" id="PTHR43591:SF24">
    <property type="entry name" value="2-METHOXY-6-POLYPRENYL-1,4-BENZOQUINOL METHYLASE, MITOCHONDRIAL"/>
    <property type="match status" value="1"/>
</dbReference>
<dbReference type="PANTHER" id="PTHR43591">
    <property type="entry name" value="METHYLTRANSFERASE"/>
    <property type="match status" value="1"/>
</dbReference>
<dbReference type="Pfam" id="PF01209">
    <property type="entry name" value="Ubie_methyltran"/>
    <property type="match status" value="1"/>
</dbReference>
<dbReference type="SUPFAM" id="SSF53335">
    <property type="entry name" value="S-adenosyl-L-methionine-dependent methyltransferases"/>
    <property type="match status" value="1"/>
</dbReference>
<dbReference type="PROSITE" id="PS51608">
    <property type="entry name" value="SAM_MT_UBIE"/>
    <property type="match status" value="1"/>
</dbReference>
<dbReference type="PROSITE" id="PS01183">
    <property type="entry name" value="UBIE_1"/>
    <property type="match status" value="1"/>
</dbReference>
<dbReference type="PROSITE" id="PS01184">
    <property type="entry name" value="UBIE_2"/>
    <property type="match status" value="1"/>
</dbReference>
<reference key="1">
    <citation type="journal article" date="2006" name="J. Bacteriol.">
        <title>Complete genome sequence of Yersinia pestis strains Antiqua and Nepal516: evidence of gene reduction in an emerging pathogen.</title>
        <authorList>
            <person name="Chain P.S.G."/>
            <person name="Hu P."/>
            <person name="Malfatti S.A."/>
            <person name="Radnedge L."/>
            <person name="Larimer F."/>
            <person name="Vergez L.M."/>
            <person name="Worsham P."/>
            <person name="Chu M.C."/>
            <person name="Andersen G.L."/>
        </authorList>
    </citation>
    <scope>NUCLEOTIDE SEQUENCE [LARGE SCALE GENOMIC DNA]</scope>
    <source>
        <strain>Nepal516</strain>
    </source>
</reference>
<reference key="2">
    <citation type="submission" date="2009-04" db="EMBL/GenBank/DDBJ databases">
        <title>Yersinia pestis Nepal516A whole genome shotgun sequencing project.</title>
        <authorList>
            <person name="Plunkett G. III"/>
            <person name="Anderson B.D."/>
            <person name="Baumler D.J."/>
            <person name="Burland V."/>
            <person name="Cabot E.L."/>
            <person name="Glasner J.D."/>
            <person name="Mau B."/>
            <person name="Neeno-Eckwall E."/>
            <person name="Perna N.T."/>
            <person name="Munk A.C."/>
            <person name="Tapia R."/>
            <person name="Green L.D."/>
            <person name="Rogers Y.C."/>
            <person name="Detter J.C."/>
            <person name="Bruce D.C."/>
            <person name="Brettin T.S."/>
        </authorList>
    </citation>
    <scope>NUCLEOTIDE SEQUENCE [LARGE SCALE GENOMIC DNA]</scope>
    <source>
        <strain>Nepal516</strain>
    </source>
</reference>
<sequence length="251" mass="28198">MVDQEKETTHFGFRTVAKEQKEGMVAEVFHSVAAKYDLMNDLMSFGVHRIWKRFTVDCSGVRRGQRVLDLAGGTGDLTAKFSRLVGEQGEVILADINESMLRMGREKLRDKGIVGNVSYVQANAEALPFPDNYFDCITISFGLRNVTEKEKALRSMFRVLKPGGRLLVLEFSKPLLEPLSKAYDAYSFHILPKIGELVAQDAESYRYLAESIRMHPDQETLKGMMADAGFENVTYSNLTGGIVALHRGFKF</sequence>
<evidence type="ECO:0000255" key="1">
    <source>
        <dbReference type="HAMAP-Rule" id="MF_01813"/>
    </source>
</evidence>
<accession>Q1CNB4</accession>
<accession>D1Q176</accession>
<proteinExistence type="inferred from homology"/>
<keyword id="KW-0474">Menaquinone biosynthesis</keyword>
<keyword id="KW-0489">Methyltransferase</keyword>
<keyword id="KW-0949">S-adenosyl-L-methionine</keyword>
<keyword id="KW-0808">Transferase</keyword>
<keyword id="KW-0831">Ubiquinone biosynthesis</keyword>
<feature type="chain" id="PRO_1000056318" description="Ubiquinone/menaquinone biosynthesis C-methyltransferase UbiE">
    <location>
        <begin position="1"/>
        <end position="251"/>
    </location>
</feature>
<feature type="binding site" evidence="1">
    <location>
        <position position="74"/>
    </location>
    <ligand>
        <name>S-adenosyl-L-methionine</name>
        <dbReference type="ChEBI" id="CHEBI:59789"/>
    </ligand>
</feature>
<feature type="binding site" evidence="1">
    <location>
        <position position="95"/>
    </location>
    <ligand>
        <name>S-adenosyl-L-methionine</name>
        <dbReference type="ChEBI" id="CHEBI:59789"/>
    </ligand>
</feature>
<feature type="binding site" evidence="1">
    <location>
        <begin position="123"/>
        <end position="124"/>
    </location>
    <ligand>
        <name>S-adenosyl-L-methionine</name>
        <dbReference type="ChEBI" id="CHEBI:59789"/>
    </ligand>
</feature>
<feature type="binding site" evidence="1">
    <location>
        <position position="140"/>
    </location>
    <ligand>
        <name>S-adenosyl-L-methionine</name>
        <dbReference type="ChEBI" id="CHEBI:59789"/>
    </ligand>
</feature>
<protein>
    <recommendedName>
        <fullName evidence="1">Ubiquinone/menaquinone biosynthesis C-methyltransferase UbiE</fullName>
        <ecNumber evidence="1">2.1.1.163</ecNumber>
        <ecNumber evidence="1">2.1.1.201</ecNumber>
    </recommendedName>
    <alternativeName>
        <fullName evidence="1">2-methoxy-6-polyprenyl-1,4-benzoquinol methylase</fullName>
    </alternativeName>
    <alternativeName>
        <fullName evidence="1">Demethylmenaquinone methyltransferase</fullName>
    </alternativeName>
</protein>
<name>UBIE_YERPN</name>